<name>RS15_MYCSS</name>
<comment type="function">
    <text evidence="1">One of the primary rRNA binding proteins, it binds directly to 16S rRNA where it helps nucleate assembly of the platform of the 30S subunit by binding and bridging several RNA helices of the 16S rRNA.</text>
</comment>
<comment type="function">
    <text evidence="1">Forms an intersubunit bridge (bridge B4) with the 23S rRNA of the 50S subunit in the ribosome.</text>
</comment>
<comment type="subunit">
    <text evidence="1">Part of the 30S ribosomal subunit. Forms a bridge to the 50S subunit in the 70S ribosome, contacting the 23S rRNA.</text>
</comment>
<comment type="similarity">
    <text evidence="1">Belongs to the universal ribosomal protein uS15 family.</text>
</comment>
<feature type="chain" id="PRO_1000054822" description="Small ribosomal subunit protein uS15">
    <location>
        <begin position="1"/>
        <end position="89"/>
    </location>
</feature>
<proteinExistence type="inferred from homology"/>
<dbReference type="EMBL" id="CP000384">
    <property type="protein sequence ID" value="ABG08207.1"/>
    <property type="molecule type" value="Genomic_DNA"/>
</dbReference>
<dbReference type="SMR" id="Q1BA77"/>
<dbReference type="KEGG" id="mmc:Mmcs_2099"/>
<dbReference type="HOGENOM" id="CLU_148518_0_0_11"/>
<dbReference type="BioCyc" id="MSP164756:G1G6O-2145-MONOMER"/>
<dbReference type="GO" id="GO:0022627">
    <property type="term" value="C:cytosolic small ribosomal subunit"/>
    <property type="evidence" value="ECO:0007669"/>
    <property type="project" value="TreeGrafter"/>
</dbReference>
<dbReference type="GO" id="GO:0019843">
    <property type="term" value="F:rRNA binding"/>
    <property type="evidence" value="ECO:0007669"/>
    <property type="project" value="UniProtKB-UniRule"/>
</dbReference>
<dbReference type="GO" id="GO:0003735">
    <property type="term" value="F:structural constituent of ribosome"/>
    <property type="evidence" value="ECO:0007669"/>
    <property type="project" value="InterPro"/>
</dbReference>
<dbReference type="GO" id="GO:0006412">
    <property type="term" value="P:translation"/>
    <property type="evidence" value="ECO:0007669"/>
    <property type="project" value="UniProtKB-UniRule"/>
</dbReference>
<dbReference type="CDD" id="cd00353">
    <property type="entry name" value="Ribosomal_S15p_S13e"/>
    <property type="match status" value="1"/>
</dbReference>
<dbReference type="FunFam" id="1.10.287.10:FF:000002">
    <property type="entry name" value="30S ribosomal protein S15"/>
    <property type="match status" value="1"/>
</dbReference>
<dbReference type="Gene3D" id="6.10.250.3130">
    <property type="match status" value="1"/>
</dbReference>
<dbReference type="Gene3D" id="1.10.287.10">
    <property type="entry name" value="S15/NS1, RNA-binding"/>
    <property type="match status" value="1"/>
</dbReference>
<dbReference type="HAMAP" id="MF_01343_B">
    <property type="entry name" value="Ribosomal_uS15_B"/>
    <property type="match status" value="1"/>
</dbReference>
<dbReference type="InterPro" id="IPR000589">
    <property type="entry name" value="Ribosomal_uS15"/>
</dbReference>
<dbReference type="InterPro" id="IPR005290">
    <property type="entry name" value="Ribosomal_uS15_bac-type"/>
</dbReference>
<dbReference type="InterPro" id="IPR009068">
    <property type="entry name" value="uS15_NS1_RNA-bd_sf"/>
</dbReference>
<dbReference type="NCBIfam" id="TIGR00952">
    <property type="entry name" value="S15_bact"/>
    <property type="match status" value="1"/>
</dbReference>
<dbReference type="PANTHER" id="PTHR23321">
    <property type="entry name" value="RIBOSOMAL PROTEIN S15, BACTERIAL AND ORGANELLAR"/>
    <property type="match status" value="1"/>
</dbReference>
<dbReference type="PANTHER" id="PTHR23321:SF26">
    <property type="entry name" value="SMALL RIBOSOMAL SUBUNIT PROTEIN US15M"/>
    <property type="match status" value="1"/>
</dbReference>
<dbReference type="Pfam" id="PF00312">
    <property type="entry name" value="Ribosomal_S15"/>
    <property type="match status" value="1"/>
</dbReference>
<dbReference type="SMART" id="SM01387">
    <property type="entry name" value="Ribosomal_S15"/>
    <property type="match status" value="1"/>
</dbReference>
<dbReference type="SUPFAM" id="SSF47060">
    <property type="entry name" value="S15/NS1 RNA-binding domain"/>
    <property type="match status" value="1"/>
</dbReference>
<dbReference type="PROSITE" id="PS00362">
    <property type="entry name" value="RIBOSOMAL_S15"/>
    <property type="match status" value="1"/>
</dbReference>
<reference key="1">
    <citation type="submission" date="2006-06" db="EMBL/GenBank/DDBJ databases">
        <title>Complete sequence of chromosome of Mycobacterium sp. MCS.</title>
        <authorList>
            <consortium name="US DOE Joint Genome Institute"/>
            <person name="Copeland A."/>
            <person name="Lucas S."/>
            <person name="Lapidus A."/>
            <person name="Barry K."/>
            <person name="Detter J.C."/>
            <person name="Glavina del Rio T."/>
            <person name="Hammon N."/>
            <person name="Israni S."/>
            <person name="Dalin E."/>
            <person name="Tice H."/>
            <person name="Pitluck S."/>
            <person name="Martinez M."/>
            <person name="Schmutz J."/>
            <person name="Larimer F."/>
            <person name="Land M."/>
            <person name="Hauser L."/>
            <person name="Kyrpides N."/>
            <person name="Kim E."/>
            <person name="Miller C.D."/>
            <person name="Hughes J.E."/>
            <person name="Anderson A.J."/>
            <person name="Sims R.C."/>
            <person name="Richardson P."/>
        </authorList>
    </citation>
    <scope>NUCLEOTIDE SEQUENCE [LARGE SCALE GENOMIC DNA]</scope>
    <source>
        <strain>MCS</strain>
    </source>
</reference>
<evidence type="ECO:0000255" key="1">
    <source>
        <dbReference type="HAMAP-Rule" id="MF_01343"/>
    </source>
</evidence>
<evidence type="ECO:0000305" key="2"/>
<organism>
    <name type="scientific">Mycobacterium sp. (strain MCS)</name>
    <dbReference type="NCBI Taxonomy" id="164756"/>
    <lineage>
        <taxon>Bacteria</taxon>
        <taxon>Bacillati</taxon>
        <taxon>Actinomycetota</taxon>
        <taxon>Actinomycetes</taxon>
        <taxon>Mycobacteriales</taxon>
        <taxon>Mycobacteriaceae</taxon>
        <taxon>Mycobacterium</taxon>
    </lineage>
</organism>
<protein>
    <recommendedName>
        <fullName evidence="1">Small ribosomal subunit protein uS15</fullName>
    </recommendedName>
    <alternativeName>
        <fullName evidence="2">30S ribosomal protein S15</fullName>
    </alternativeName>
</protein>
<gene>
    <name evidence="1" type="primary">rpsO</name>
    <name type="ordered locus">Mmcs_2099</name>
</gene>
<accession>Q1BA77</accession>
<keyword id="KW-0687">Ribonucleoprotein</keyword>
<keyword id="KW-0689">Ribosomal protein</keyword>
<keyword id="KW-0694">RNA-binding</keyword>
<keyword id="KW-0699">rRNA-binding</keyword>
<sequence>MALTAEQKKEILGQYGLHESDTGSPEAQVALLTKRISDLTEHLKQHKHDHHSRRGLLLLVGRRRRLLKYVAQVDVERYRSLIERLGLRR</sequence>